<gene>
    <name type="primary">51</name>
</gene>
<name>VG51_EHV2</name>
<reference key="1">
    <citation type="journal article" date="1995" name="J. Mol. Biol.">
        <title>The DNA sequence of equine herpesvirus 2.</title>
        <authorList>
            <person name="Telford E.A.R."/>
            <person name="Watson M.S."/>
            <person name="Aird H.C."/>
            <person name="Perry J."/>
            <person name="Davison A.J."/>
        </authorList>
    </citation>
    <scope>NUCLEOTIDE SEQUENCE [LARGE SCALE GENOMIC DNA]</scope>
</reference>
<reference key="2">
    <citation type="submission" date="2015-01" db="EMBL/GenBank/DDBJ databases">
        <authorList>
            <person name="Davison A.J."/>
        </authorList>
    </citation>
    <scope>SEQUENCE REVISION</scope>
</reference>
<sequence>MAKRINFTSCLIFTSCFTAFIVSLCLLVSSCVNLVNDVIIPSVHMSRRADITPFIDNYTINFTDLHFFTDGANASVPQPEAIFINSNNFSLYAHNCSARDNCSVHSASITQEGRCYHYSRAKYSFAGCLEFCRSYSPCYYLINPQKHMTAVRQNINESDTYWVGIFKSPKNTWVDLDNSSVTGVHDLYEDSYCAYIGLYTEVPWPSFYCDTPRRCLCGGSKGI</sequence>
<accession>Q66653</accession>
<dbReference type="EMBL" id="U20824">
    <property type="protein sequence ID" value="AAC13839.2"/>
    <property type="molecule type" value="Genomic_DNA"/>
</dbReference>
<dbReference type="PIR" id="S55646">
    <property type="entry name" value="S55646"/>
</dbReference>
<dbReference type="SMR" id="Q66653"/>
<dbReference type="KEGG" id="vg:1461048"/>
<dbReference type="Proteomes" id="UP000007083">
    <property type="component" value="Segment"/>
</dbReference>
<dbReference type="GO" id="GO:0030246">
    <property type="term" value="F:carbohydrate binding"/>
    <property type="evidence" value="ECO:0007669"/>
    <property type="project" value="UniProtKB-KW"/>
</dbReference>
<dbReference type="Gene3D" id="3.10.100.10">
    <property type="entry name" value="Mannose-Binding Protein A, subunit A"/>
    <property type="match status" value="1"/>
</dbReference>
<dbReference type="InterPro" id="IPR001304">
    <property type="entry name" value="C-type_lectin-like"/>
</dbReference>
<dbReference type="InterPro" id="IPR016186">
    <property type="entry name" value="C-type_lectin-like/link_sf"/>
</dbReference>
<dbReference type="InterPro" id="IPR016187">
    <property type="entry name" value="CTDL_fold"/>
</dbReference>
<dbReference type="Pfam" id="PF00059">
    <property type="entry name" value="Lectin_C"/>
    <property type="match status" value="1"/>
</dbReference>
<dbReference type="SMART" id="SM00034">
    <property type="entry name" value="CLECT"/>
    <property type="match status" value="1"/>
</dbReference>
<dbReference type="SUPFAM" id="SSF56436">
    <property type="entry name" value="C-type lectin-like"/>
    <property type="match status" value="1"/>
</dbReference>
<dbReference type="PROSITE" id="PS50041">
    <property type="entry name" value="C_TYPE_LECTIN_2"/>
    <property type="match status" value="1"/>
</dbReference>
<organism>
    <name type="scientific">Equine herpesvirus 2 (strain 86/87)</name>
    <name type="common">EHV-2</name>
    <dbReference type="NCBI Taxonomy" id="82831"/>
    <lineage>
        <taxon>Viruses</taxon>
        <taxon>Duplodnaviria</taxon>
        <taxon>Heunggongvirae</taxon>
        <taxon>Peploviricota</taxon>
        <taxon>Herviviricetes</taxon>
        <taxon>Herpesvirales</taxon>
        <taxon>Orthoherpesviridae</taxon>
        <taxon>Gammaherpesvirinae</taxon>
        <taxon>Percavirus</taxon>
        <taxon>Percavirus equidgamma2</taxon>
        <taxon>Equid gammaherpesvirus 2</taxon>
    </lineage>
</organism>
<protein>
    <recommendedName>
        <fullName>Putative C-type lectin protein 51</fullName>
    </recommendedName>
</protein>
<feature type="signal peptide" evidence="2">
    <location>
        <begin position="1"/>
        <end position="31"/>
    </location>
</feature>
<feature type="chain" id="PRO_0000405979" description="Putative C-type lectin protein 51">
    <location>
        <begin position="32"/>
        <end position="223"/>
    </location>
</feature>
<feature type="domain" description="C-type lectin">
    <location>
        <begin position="111"/>
        <end position="218"/>
    </location>
</feature>
<feature type="disulfide bond" evidence="1">
    <location>
        <begin position="193"/>
        <end position="209"/>
    </location>
</feature>
<evidence type="ECO:0000250" key="1"/>
<evidence type="ECO:0000255" key="2"/>
<proteinExistence type="inferred from homology"/>
<organismHost>
    <name type="scientific">Equus caballus</name>
    <name type="common">Horse</name>
    <dbReference type="NCBI Taxonomy" id="9796"/>
</organismHost>
<keyword id="KW-1015">Disulfide bond</keyword>
<keyword id="KW-0430">Lectin</keyword>
<keyword id="KW-1185">Reference proteome</keyword>
<keyword id="KW-0732">Signal</keyword>